<dbReference type="EMBL" id="AC141508">
    <property type="status" value="NOT_ANNOTATED_CDS"/>
    <property type="molecule type" value="Genomic_DNA"/>
</dbReference>
<dbReference type="EMBL" id="CH474104">
    <property type="protein sequence ID" value="EDL84790.1"/>
    <property type="molecule type" value="Genomic_DNA"/>
</dbReference>
<dbReference type="EMBL" id="AF092733">
    <property type="protein sequence ID" value="AAD05266.1"/>
    <property type="molecule type" value="mRNA"/>
</dbReference>
<dbReference type="RefSeq" id="NP_058899.1">
    <property type="nucleotide sequence ID" value="NM_017203.1"/>
</dbReference>
<dbReference type="SMR" id="Q9Z217"/>
<dbReference type="FunCoup" id="Q9Z217">
    <property type="interactions" value="1349"/>
</dbReference>
<dbReference type="STRING" id="10116.ENSRNOP00000010035"/>
<dbReference type="GlyCosmos" id="Q9Z217">
    <property type="glycosylation" value="1 site, No reported glycans"/>
</dbReference>
<dbReference type="GlyGen" id="Q9Z217">
    <property type="glycosylation" value="1 site"/>
</dbReference>
<dbReference type="PhosphoSitePlus" id="Q9Z217"/>
<dbReference type="PaxDb" id="10116-ENSRNOP00000010035"/>
<dbReference type="Ensembl" id="ENSRNOT00000010035.4">
    <property type="protein sequence ID" value="ENSRNOP00000010035.2"/>
    <property type="gene ID" value="ENSRNOG00000007610.6"/>
</dbReference>
<dbReference type="GeneID" id="29454"/>
<dbReference type="KEGG" id="rno:29454"/>
<dbReference type="UCSC" id="RGD:2673">
    <property type="organism name" value="rat"/>
</dbReference>
<dbReference type="AGR" id="RGD:2673"/>
<dbReference type="CTD" id="10220"/>
<dbReference type="RGD" id="2673">
    <property type="gene designation" value="Gdf11"/>
</dbReference>
<dbReference type="eggNOG" id="KOG3900">
    <property type="taxonomic scope" value="Eukaryota"/>
</dbReference>
<dbReference type="GeneTree" id="ENSGT00940000161052"/>
<dbReference type="InParanoid" id="Q9Z217"/>
<dbReference type="OMA" id="QADAPFE"/>
<dbReference type="OrthoDB" id="5948587at2759"/>
<dbReference type="PhylomeDB" id="Q9Z217"/>
<dbReference type="TreeFam" id="TF318514"/>
<dbReference type="PRO" id="PR:Q9Z217"/>
<dbReference type="Proteomes" id="UP000002494">
    <property type="component" value="Chromosome 7"/>
</dbReference>
<dbReference type="Proteomes" id="UP000234681">
    <property type="component" value="Chromosome 7"/>
</dbReference>
<dbReference type="Bgee" id="ENSRNOG00000007610">
    <property type="expression patterns" value="Expressed in cerebellum and 20 other cell types or tissues"/>
</dbReference>
<dbReference type="GO" id="GO:0005615">
    <property type="term" value="C:extracellular space"/>
    <property type="evidence" value="ECO:0000266"/>
    <property type="project" value="RGD"/>
</dbReference>
<dbReference type="GO" id="GO:0032991">
    <property type="term" value="C:protein-containing complex"/>
    <property type="evidence" value="ECO:0000266"/>
    <property type="project" value="RGD"/>
</dbReference>
<dbReference type="GO" id="GO:0005125">
    <property type="term" value="F:cytokine activity"/>
    <property type="evidence" value="ECO:0000318"/>
    <property type="project" value="GO_Central"/>
</dbReference>
<dbReference type="GO" id="GO:0008083">
    <property type="term" value="F:growth factor activity"/>
    <property type="evidence" value="ECO:0007669"/>
    <property type="project" value="UniProtKB-KW"/>
</dbReference>
<dbReference type="GO" id="GO:0032924">
    <property type="term" value="P:activin receptor signaling pathway"/>
    <property type="evidence" value="ECO:0000266"/>
    <property type="project" value="RGD"/>
</dbReference>
<dbReference type="GO" id="GO:0035881">
    <property type="term" value="P:amacrine cell differentiation"/>
    <property type="evidence" value="ECO:0000266"/>
    <property type="project" value="RGD"/>
</dbReference>
<dbReference type="GO" id="GO:0009887">
    <property type="term" value="P:animal organ morphogenesis"/>
    <property type="evidence" value="ECO:0000266"/>
    <property type="project" value="RGD"/>
</dbReference>
<dbReference type="GO" id="GO:0009952">
    <property type="term" value="P:anterior/posterior pattern specification"/>
    <property type="evidence" value="ECO:0000266"/>
    <property type="project" value="RGD"/>
</dbReference>
<dbReference type="GO" id="GO:0048593">
    <property type="term" value="P:camera-type eye morphogenesis"/>
    <property type="evidence" value="ECO:0000266"/>
    <property type="project" value="RGD"/>
</dbReference>
<dbReference type="GO" id="GO:0008283">
    <property type="term" value="P:cell population proliferation"/>
    <property type="evidence" value="ECO:0000266"/>
    <property type="project" value="RGD"/>
</dbReference>
<dbReference type="GO" id="GO:0001656">
    <property type="term" value="P:metanephros development"/>
    <property type="evidence" value="ECO:0000266"/>
    <property type="project" value="RGD"/>
</dbReference>
<dbReference type="GO" id="GO:1902870">
    <property type="term" value="P:negative regulation of amacrine cell differentiation"/>
    <property type="evidence" value="ECO:0000266"/>
    <property type="project" value="RGD"/>
</dbReference>
<dbReference type="GO" id="GO:0008285">
    <property type="term" value="P:negative regulation of cell population proliferation"/>
    <property type="evidence" value="ECO:0000266"/>
    <property type="project" value="RGD"/>
</dbReference>
<dbReference type="GO" id="GO:0045665">
    <property type="term" value="P:negative regulation of neuron differentiation"/>
    <property type="evidence" value="ECO:0000315"/>
    <property type="project" value="RGD"/>
</dbReference>
<dbReference type="GO" id="GO:0030182">
    <property type="term" value="P:neuron differentiation"/>
    <property type="evidence" value="ECO:0000266"/>
    <property type="project" value="RGD"/>
</dbReference>
<dbReference type="GO" id="GO:0031016">
    <property type="term" value="P:pancreas development"/>
    <property type="evidence" value="ECO:0000266"/>
    <property type="project" value="RGD"/>
</dbReference>
<dbReference type="GO" id="GO:0060391">
    <property type="term" value="P:positive regulation of SMAD protein signal transduction"/>
    <property type="evidence" value="ECO:0000250"/>
    <property type="project" value="UniProtKB"/>
</dbReference>
<dbReference type="GO" id="GO:0060021">
    <property type="term" value="P:roof of mouth development"/>
    <property type="evidence" value="ECO:0000266"/>
    <property type="project" value="RGD"/>
</dbReference>
<dbReference type="GO" id="GO:0001501">
    <property type="term" value="P:skeletal system development"/>
    <property type="evidence" value="ECO:0000266"/>
    <property type="project" value="RGD"/>
</dbReference>
<dbReference type="GO" id="GO:0021512">
    <property type="term" value="P:spinal cord anterior/posterior patterning"/>
    <property type="evidence" value="ECO:0000266"/>
    <property type="project" value="RGD"/>
</dbReference>
<dbReference type="GO" id="GO:0072560">
    <property type="term" value="P:type B pancreatic cell maturation"/>
    <property type="evidence" value="ECO:0000266"/>
    <property type="project" value="RGD"/>
</dbReference>
<dbReference type="GO" id="GO:0001657">
    <property type="term" value="P:ureteric bud development"/>
    <property type="evidence" value="ECO:0000266"/>
    <property type="project" value="RGD"/>
</dbReference>
<dbReference type="CDD" id="cd19388">
    <property type="entry name" value="TGF_beta_GDF8"/>
    <property type="match status" value="1"/>
</dbReference>
<dbReference type="FunFam" id="2.60.120.970:FF:000003">
    <property type="entry name" value="Growth differentiation factor 11"/>
    <property type="match status" value="1"/>
</dbReference>
<dbReference type="FunFam" id="2.10.90.10:FF:000006">
    <property type="entry name" value="growth/differentiation factor 8"/>
    <property type="match status" value="1"/>
</dbReference>
<dbReference type="Gene3D" id="2.60.120.970">
    <property type="match status" value="1"/>
</dbReference>
<dbReference type="Gene3D" id="2.10.90.10">
    <property type="entry name" value="Cystine-knot cytokines"/>
    <property type="match status" value="1"/>
</dbReference>
<dbReference type="InterPro" id="IPR029034">
    <property type="entry name" value="Cystine-knot_cytokine"/>
</dbReference>
<dbReference type="InterPro" id="IPR001839">
    <property type="entry name" value="TGF-b_C"/>
</dbReference>
<dbReference type="InterPro" id="IPR001111">
    <property type="entry name" value="TGF-b_propeptide"/>
</dbReference>
<dbReference type="InterPro" id="IPR015615">
    <property type="entry name" value="TGF-beta-rel"/>
</dbReference>
<dbReference type="InterPro" id="IPR017948">
    <property type="entry name" value="TGFb_CS"/>
</dbReference>
<dbReference type="PANTHER" id="PTHR11848:SF166">
    <property type="entry name" value="GROWTH_DIFFERENTIATION FACTOR 11"/>
    <property type="match status" value="1"/>
</dbReference>
<dbReference type="PANTHER" id="PTHR11848">
    <property type="entry name" value="TGF-BETA FAMILY"/>
    <property type="match status" value="1"/>
</dbReference>
<dbReference type="Pfam" id="PF00019">
    <property type="entry name" value="TGF_beta"/>
    <property type="match status" value="1"/>
</dbReference>
<dbReference type="Pfam" id="PF00688">
    <property type="entry name" value="TGFb_propeptide"/>
    <property type="match status" value="1"/>
</dbReference>
<dbReference type="SMART" id="SM00204">
    <property type="entry name" value="TGFB"/>
    <property type="match status" value="1"/>
</dbReference>
<dbReference type="SUPFAM" id="SSF57501">
    <property type="entry name" value="Cystine-knot cytokines"/>
    <property type="match status" value="1"/>
</dbReference>
<dbReference type="PROSITE" id="PS00250">
    <property type="entry name" value="TGF_BETA_1"/>
    <property type="match status" value="1"/>
</dbReference>
<dbReference type="PROSITE" id="PS51362">
    <property type="entry name" value="TGF_BETA_2"/>
    <property type="match status" value="1"/>
</dbReference>
<keyword id="KW-0165">Cleavage on pair of basic residues</keyword>
<keyword id="KW-0202">Cytokine</keyword>
<keyword id="KW-1015">Disulfide bond</keyword>
<keyword id="KW-0325">Glycoprotein</keyword>
<keyword id="KW-0339">Growth factor</keyword>
<keyword id="KW-1185">Reference proteome</keyword>
<keyword id="KW-0964">Secreted</keyword>
<keyword id="KW-0732">Signal</keyword>
<accession>Q9Z217</accession>
<accession>G3V6Y2</accession>
<name>GDF11_RAT</name>
<proteinExistence type="evidence at transcript level"/>
<comment type="function">
    <text evidence="2 3">Secreted signal that acts globally to regulate anterior/posterior axial patterning during development. May play critical roles in patterning both mesodermal and neural tissues. It is required for proper vertebral patterning and orofacial development. Signals through activin receptors type-2, ACVR2A and ACVR2B, and activin receptors type-1, ACVR1B, ACVR1C and TGFBR1 leading to the phosphorylation of SMAD2 and SMAD3.</text>
</comment>
<comment type="subunit">
    <text evidence="2 3">Homodimer; disulfide-linked (By similarity). Interacts directly with ACVR2B. Interacts directly with ACVR2A. Interacts with ACVR1B, TGFBR1 and ACVR1C in an ACVR2B-dependent manner (By similarity). Interacts with FST isoform 2/FS288 (By similarity).</text>
</comment>
<comment type="subcellular location">
    <subcellularLocation>
        <location evidence="5">Secreted</location>
    </subcellularLocation>
</comment>
<comment type="PTM">
    <text evidence="3">Synthesized as large precursor molecule that undergoes proteolytic cleavage by furin-like proteases. This produces an inactive form consisting of the mature C-terminal portion non-covalently bound to its cleaved N-terminal propeptide. Activation of the mature form requires additional cleavage of the propeptide by a tolloid-like metalloproteinase.</text>
</comment>
<comment type="similarity">
    <text evidence="5">Belongs to the TGF-beta family.</text>
</comment>
<sequence length="405" mass="44921">MVLAAPLLLGFLLLALELRPRGEAAEGPAAAAAAAAAAAGVGGERSSRPAPSAAPEPDGCPVCVWRQHSRELRLESIKSQILSKLRLKEAPNISREVVKQLLPKAPPLQQILDLHDFQGDALQPEDFLEEDEYHATTETVISMAQETDPAVQTDGSPLCCHFHFSPKVMFTKVLKAQLWVYLRPVPRPATVYLQILRLKPLTGEGTAGGGGGGRRHIRIRSLKIELHSRSGHWQSIDFKQVLHSWFRQPQSNWGIEINAFDPSGTDLAVTSLGPGAEGLHPFMELRVLENTKRSRRNLGLDCDEHSSESRCCRYPLTVDFEAFGWDWIIAPKRYKANYCSGQCEYMFMQKYPHTHLVQQANPRGSAGPCCTPTKMSPINMLYFNDKQQIIYGKIPGMVVDRCGCS</sequence>
<evidence type="ECO:0000250" key="1"/>
<evidence type="ECO:0000250" key="2">
    <source>
        <dbReference type="UniProtKB" id="O95390"/>
    </source>
</evidence>
<evidence type="ECO:0000250" key="3">
    <source>
        <dbReference type="UniProtKB" id="Q9Z1W4"/>
    </source>
</evidence>
<evidence type="ECO:0000255" key="4"/>
<evidence type="ECO:0000305" key="5"/>
<feature type="signal peptide" evidence="4">
    <location>
        <begin position="1"/>
        <end position="24"/>
    </location>
</feature>
<feature type="propeptide" id="PRO_0000033990" evidence="1">
    <location>
        <begin position="25"/>
        <end position="296"/>
    </location>
</feature>
<feature type="chain" id="PRO_0000033991" description="Growth/differentiation factor 11">
    <location>
        <begin position="297"/>
        <end position="405"/>
    </location>
</feature>
<feature type="site" description="Cleavage" evidence="3">
    <location>
        <begin position="119"/>
        <end position="120"/>
    </location>
</feature>
<feature type="site" description="Cleavage; by FURIN" evidence="2">
    <location>
        <position position="296"/>
    </location>
</feature>
<feature type="glycosylation site" description="N-linked (GlcNAc...) asparagine" evidence="4">
    <location>
        <position position="92"/>
    </location>
</feature>
<feature type="disulfide bond" evidence="2">
    <location>
        <begin position="302"/>
        <end position="312"/>
    </location>
</feature>
<feature type="disulfide bond" evidence="2">
    <location>
        <begin position="311"/>
        <end position="370"/>
    </location>
</feature>
<feature type="disulfide bond" evidence="2">
    <location>
        <begin position="339"/>
        <end position="402"/>
    </location>
</feature>
<feature type="disulfide bond" evidence="2">
    <location>
        <begin position="343"/>
        <end position="404"/>
    </location>
</feature>
<feature type="disulfide bond" description="Interchain" evidence="2">
    <location>
        <position position="369"/>
    </location>
</feature>
<feature type="sequence conflict" description="In Ref. 3; AAD05266." evidence="5" ref="3">
    <original>ELRLE</original>
    <variation>RVRGL</variation>
    <location>
        <begin position="71"/>
        <end position="75"/>
    </location>
</feature>
<feature type="sequence conflict" description="In Ref. 3; AAD05266." evidence="5" ref="3">
    <original>L</original>
    <variation>C</variation>
    <location>
        <position position="279"/>
    </location>
</feature>
<feature type="sequence conflict" description="In Ref. 3; AAD05266." evidence="5" ref="3">
    <original>F</original>
    <variation>S</variation>
    <location>
        <position position="323"/>
    </location>
</feature>
<protein>
    <recommendedName>
        <fullName>Growth/differentiation factor 11</fullName>
        <shortName>GDF-11</shortName>
    </recommendedName>
    <alternativeName>
        <fullName>Bone morphogenetic protein 11</fullName>
        <shortName>BMP-11</shortName>
    </alternativeName>
</protein>
<organism>
    <name type="scientific">Rattus norvegicus</name>
    <name type="common">Rat</name>
    <dbReference type="NCBI Taxonomy" id="10116"/>
    <lineage>
        <taxon>Eukaryota</taxon>
        <taxon>Metazoa</taxon>
        <taxon>Chordata</taxon>
        <taxon>Craniata</taxon>
        <taxon>Vertebrata</taxon>
        <taxon>Euteleostomi</taxon>
        <taxon>Mammalia</taxon>
        <taxon>Eutheria</taxon>
        <taxon>Euarchontoglires</taxon>
        <taxon>Glires</taxon>
        <taxon>Rodentia</taxon>
        <taxon>Myomorpha</taxon>
        <taxon>Muroidea</taxon>
        <taxon>Muridae</taxon>
        <taxon>Murinae</taxon>
        <taxon>Rattus</taxon>
    </lineage>
</organism>
<gene>
    <name type="primary">Gdf11</name>
    <name type="synonym">Bmp11</name>
</gene>
<reference key="1">
    <citation type="journal article" date="2004" name="Nature">
        <title>Genome sequence of the Brown Norway rat yields insights into mammalian evolution.</title>
        <authorList>
            <person name="Gibbs R.A."/>
            <person name="Weinstock G.M."/>
            <person name="Metzker M.L."/>
            <person name="Muzny D.M."/>
            <person name="Sodergren E.J."/>
            <person name="Scherer S."/>
            <person name="Scott G."/>
            <person name="Steffen D."/>
            <person name="Worley K.C."/>
            <person name="Burch P.E."/>
            <person name="Okwuonu G."/>
            <person name="Hines S."/>
            <person name="Lewis L."/>
            <person name="Deramo C."/>
            <person name="Delgado O."/>
            <person name="Dugan-Rocha S."/>
            <person name="Miner G."/>
            <person name="Morgan M."/>
            <person name="Hawes A."/>
            <person name="Gill R."/>
            <person name="Holt R.A."/>
            <person name="Adams M.D."/>
            <person name="Amanatides P.G."/>
            <person name="Baden-Tillson H."/>
            <person name="Barnstead M."/>
            <person name="Chin S."/>
            <person name="Evans C.A."/>
            <person name="Ferriera S."/>
            <person name="Fosler C."/>
            <person name="Glodek A."/>
            <person name="Gu Z."/>
            <person name="Jennings D."/>
            <person name="Kraft C.L."/>
            <person name="Nguyen T."/>
            <person name="Pfannkoch C.M."/>
            <person name="Sitter C."/>
            <person name="Sutton G.G."/>
            <person name="Venter J.C."/>
            <person name="Woodage T."/>
            <person name="Smith D."/>
            <person name="Lee H.-M."/>
            <person name="Gustafson E."/>
            <person name="Cahill P."/>
            <person name="Kana A."/>
            <person name="Doucette-Stamm L."/>
            <person name="Weinstock K."/>
            <person name="Fechtel K."/>
            <person name="Weiss R.B."/>
            <person name="Dunn D.M."/>
            <person name="Green E.D."/>
            <person name="Blakesley R.W."/>
            <person name="Bouffard G.G."/>
            <person name="De Jong P.J."/>
            <person name="Osoegawa K."/>
            <person name="Zhu B."/>
            <person name="Marra M."/>
            <person name="Schein J."/>
            <person name="Bosdet I."/>
            <person name="Fjell C."/>
            <person name="Jones S."/>
            <person name="Krzywinski M."/>
            <person name="Mathewson C."/>
            <person name="Siddiqui A."/>
            <person name="Wye N."/>
            <person name="McPherson J."/>
            <person name="Zhao S."/>
            <person name="Fraser C.M."/>
            <person name="Shetty J."/>
            <person name="Shatsman S."/>
            <person name="Geer K."/>
            <person name="Chen Y."/>
            <person name="Abramzon S."/>
            <person name="Nierman W.C."/>
            <person name="Havlak P.H."/>
            <person name="Chen R."/>
            <person name="Durbin K.J."/>
            <person name="Egan A."/>
            <person name="Ren Y."/>
            <person name="Song X.-Z."/>
            <person name="Li B."/>
            <person name="Liu Y."/>
            <person name="Qin X."/>
            <person name="Cawley S."/>
            <person name="Cooney A.J."/>
            <person name="D'Souza L.M."/>
            <person name="Martin K."/>
            <person name="Wu J.Q."/>
            <person name="Gonzalez-Garay M.L."/>
            <person name="Jackson A.R."/>
            <person name="Kalafus K.J."/>
            <person name="McLeod M.P."/>
            <person name="Milosavljevic A."/>
            <person name="Virk D."/>
            <person name="Volkov A."/>
            <person name="Wheeler D.A."/>
            <person name="Zhang Z."/>
            <person name="Bailey J.A."/>
            <person name="Eichler E.E."/>
            <person name="Tuzun E."/>
            <person name="Birney E."/>
            <person name="Mongin E."/>
            <person name="Ureta-Vidal A."/>
            <person name="Woodwark C."/>
            <person name="Zdobnov E."/>
            <person name="Bork P."/>
            <person name="Suyama M."/>
            <person name="Torrents D."/>
            <person name="Alexandersson M."/>
            <person name="Trask B.J."/>
            <person name="Young J.M."/>
            <person name="Huang H."/>
            <person name="Wang H."/>
            <person name="Xing H."/>
            <person name="Daniels S."/>
            <person name="Gietzen D."/>
            <person name="Schmidt J."/>
            <person name="Stevens K."/>
            <person name="Vitt U."/>
            <person name="Wingrove J."/>
            <person name="Camara F."/>
            <person name="Mar Alba M."/>
            <person name="Abril J.F."/>
            <person name="Guigo R."/>
            <person name="Smit A."/>
            <person name="Dubchak I."/>
            <person name="Rubin E.M."/>
            <person name="Couronne O."/>
            <person name="Poliakov A."/>
            <person name="Huebner N."/>
            <person name="Ganten D."/>
            <person name="Goesele C."/>
            <person name="Hummel O."/>
            <person name="Kreitler T."/>
            <person name="Lee Y.-A."/>
            <person name="Monti J."/>
            <person name="Schulz H."/>
            <person name="Zimdahl H."/>
            <person name="Himmelbauer H."/>
            <person name="Lehrach H."/>
            <person name="Jacob H.J."/>
            <person name="Bromberg S."/>
            <person name="Gullings-Handley J."/>
            <person name="Jensen-Seaman M.I."/>
            <person name="Kwitek A.E."/>
            <person name="Lazar J."/>
            <person name="Pasko D."/>
            <person name="Tonellato P.J."/>
            <person name="Twigger S."/>
            <person name="Ponting C.P."/>
            <person name="Duarte J.M."/>
            <person name="Rice S."/>
            <person name="Goodstadt L."/>
            <person name="Beatson S.A."/>
            <person name="Emes R.D."/>
            <person name="Winter E.E."/>
            <person name="Webber C."/>
            <person name="Brandt P."/>
            <person name="Nyakatura G."/>
            <person name="Adetobi M."/>
            <person name="Chiaromonte F."/>
            <person name="Elnitski L."/>
            <person name="Eswara P."/>
            <person name="Hardison R.C."/>
            <person name="Hou M."/>
            <person name="Kolbe D."/>
            <person name="Makova K."/>
            <person name="Miller W."/>
            <person name="Nekrutenko A."/>
            <person name="Riemer C."/>
            <person name="Schwartz S."/>
            <person name="Taylor J."/>
            <person name="Yang S."/>
            <person name="Zhang Y."/>
            <person name="Lindpaintner K."/>
            <person name="Andrews T.D."/>
            <person name="Caccamo M."/>
            <person name="Clamp M."/>
            <person name="Clarke L."/>
            <person name="Curwen V."/>
            <person name="Durbin R.M."/>
            <person name="Eyras E."/>
            <person name="Searle S.M."/>
            <person name="Cooper G.M."/>
            <person name="Batzoglou S."/>
            <person name="Brudno M."/>
            <person name="Sidow A."/>
            <person name="Stone E.A."/>
            <person name="Payseur B.A."/>
            <person name="Bourque G."/>
            <person name="Lopez-Otin C."/>
            <person name="Puente X.S."/>
            <person name="Chakrabarti K."/>
            <person name="Chatterji S."/>
            <person name="Dewey C."/>
            <person name="Pachter L."/>
            <person name="Bray N."/>
            <person name="Yap V.B."/>
            <person name="Caspi A."/>
            <person name="Tesler G."/>
            <person name="Pevzner P.A."/>
            <person name="Haussler D."/>
            <person name="Roskin K.M."/>
            <person name="Baertsch R."/>
            <person name="Clawson H."/>
            <person name="Furey T.S."/>
            <person name="Hinrichs A.S."/>
            <person name="Karolchik D."/>
            <person name="Kent W.J."/>
            <person name="Rosenbloom K.R."/>
            <person name="Trumbower H."/>
            <person name="Weirauch M."/>
            <person name="Cooper D.N."/>
            <person name="Stenson P.D."/>
            <person name="Ma B."/>
            <person name="Brent M."/>
            <person name="Arumugam M."/>
            <person name="Shteynberg D."/>
            <person name="Copley R.R."/>
            <person name="Taylor M.S."/>
            <person name="Riethman H."/>
            <person name="Mudunuri U."/>
            <person name="Peterson J."/>
            <person name="Guyer M."/>
            <person name="Felsenfeld A."/>
            <person name="Old S."/>
            <person name="Mockrin S."/>
            <person name="Collins F.S."/>
        </authorList>
    </citation>
    <scope>NUCLEOTIDE SEQUENCE [LARGE SCALE GENOMIC DNA]</scope>
    <source>
        <strain>Brown Norway</strain>
    </source>
</reference>
<reference key="2">
    <citation type="submission" date="2005-09" db="EMBL/GenBank/DDBJ databases">
        <authorList>
            <person name="Mural R.J."/>
            <person name="Adams M.D."/>
            <person name="Myers E.W."/>
            <person name="Smith H.O."/>
            <person name="Venter J.C."/>
        </authorList>
    </citation>
    <scope>NUCLEOTIDE SEQUENCE [LARGE SCALE GENOMIC DNA]</scope>
    <source>
        <strain>Brown Norway</strain>
    </source>
</reference>
<reference key="3">
    <citation type="journal article" date="1999" name="Mech. Dev.">
        <title>Expression of growth/differentiation factor 11, a new member of the BMP/TGFbeta superfamily during mouse embryogenesis.</title>
        <authorList>
            <person name="Nakashima M."/>
            <person name="Toyono T."/>
            <person name="Akamine A."/>
            <person name="Joyner A."/>
        </authorList>
    </citation>
    <scope>NUCLEOTIDE SEQUENCE [MRNA] OF 55-399</scope>
    <source>
        <tissue>Dental pulp</tissue>
    </source>
</reference>